<organism>
    <name type="scientific">Roseobacter denitrificans (strain ATCC 33942 / OCh 114)</name>
    <name type="common">Erythrobacter sp. (strain OCh 114)</name>
    <name type="synonym">Roseobacter denitrificans</name>
    <dbReference type="NCBI Taxonomy" id="375451"/>
    <lineage>
        <taxon>Bacteria</taxon>
        <taxon>Pseudomonadati</taxon>
        <taxon>Pseudomonadota</taxon>
        <taxon>Alphaproteobacteria</taxon>
        <taxon>Rhodobacterales</taxon>
        <taxon>Roseobacteraceae</taxon>
        <taxon>Roseobacter</taxon>
    </lineage>
</organism>
<proteinExistence type="inferred from homology"/>
<reference key="1">
    <citation type="journal article" date="1991" name="Mol. Microbiol.">
        <title>Organization of the genes coding for the reaction-centre L and M subunits and B870 antenna polypeptides alpha and beta from the aerobic photosynthetic bacterium Erythrobacter species OCH114.</title>
        <authorList>
            <person name="Liebetanz R."/>
            <person name="Hornberger U."/>
            <person name="Drews G."/>
        </authorList>
    </citation>
    <scope>NUCLEOTIDE SEQUENCE [GENOMIC DNA]</scope>
</reference>
<reference key="2">
    <citation type="journal article" date="2007" name="J. Bacteriol.">
        <title>The complete genome sequence of Roseobacter denitrificans reveals a mixotrophic rather than photosynthetic metabolism.</title>
        <authorList>
            <person name="Swingley W.D."/>
            <person name="Sadekar S."/>
            <person name="Mastrian S.D."/>
            <person name="Matthies H.J."/>
            <person name="Hao J."/>
            <person name="Ramos H."/>
            <person name="Acharya C.R."/>
            <person name="Conrad A.L."/>
            <person name="Taylor H.L."/>
            <person name="Dejesa L.C."/>
            <person name="Shah M.K."/>
            <person name="O'Huallachain M.E."/>
            <person name="Lince M.T."/>
            <person name="Blankenship R.E."/>
            <person name="Beatty J.T."/>
            <person name="Touchman J.W."/>
        </authorList>
    </citation>
    <scope>NUCLEOTIDE SEQUENCE [LARGE SCALE GENOMIC DNA]</scope>
    <source>
        <strain>ATCC 33942 / OCh 114</strain>
    </source>
</reference>
<evidence type="ECO:0000250" key="1"/>
<evidence type="ECO:0000255" key="2"/>
<evidence type="ECO:0000305" key="3"/>
<feature type="initiator methionine" description="Removed" evidence="1">
    <location>
        <position position="1"/>
    </location>
</feature>
<feature type="chain" id="PRO_0000099814" description="Light-harvesting protein B-870 beta chain">
    <location>
        <begin position="2"/>
        <end position="50"/>
    </location>
</feature>
<feature type="topological domain" description="Cytoplasmic" evidence="2">
    <location>
        <begin position="2"/>
        <end position="22"/>
    </location>
</feature>
<feature type="transmembrane region" description="Helical" evidence="2">
    <location>
        <begin position="23"/>
        <end position="45"/>
    </location>
</feature>
<feature type="topological domain" description="Periplasmic" evidence="2">
    <location>
        <begin position="46"/>
        <end position="50"/>
    </location>
</feature>
<feature type="binding site" description="axial binding residue" evidence="2">
    <location>
        <position position="21"/>
    </location>
    <ligand>
        <name>a bacteriochlorophyll</name>
        <dbReference type="ChEBI" id="CHEBI:38201"/>
    </ligand>
    <ligandPart>
        <name>Mg</name>
        <dbReference type="ChEBI" id="CHEBI:25107"/>
    </ligandPart>
</feature>
<feature type="binding site" description="axial binding residue" evidence="2">
    <location>
        <position position="39"/>
    </location>
    <ligand>
        <name>a bacteriochlorophyll</name>
        <dbReference type="ChEBI" id="CHEBI:38201"/>
    </ligand>
    <ligandPart>
        <name>Mg</name>
        <dbReference type="ChEBI" id="CHEBI:25107"/>
    </ligandPart>
</feature>
<name>LHB_ROSDO</name>
<dbReference type="EMBL" id="X57597">
    <property type="protein sequence ID" value="CAA40815.1"/>
    <property type="molecule type" value="Genomic_DNA"/>
</dbReference>
<dbReference type="EMBL" id="CP000362">
    <property type="protein sequence ID" value="ABG29842.1"/>
    <property type="molecule type" value="Genomic_DNA"/>
</dbReference>
<dbReference type="RefSeq" id="WP_011566464.1">
    <property type="nucleotide sequence ID" value="NC_008209.1"/>
</dbReference>
<dbReference type="SMR" id="P26274"/>
<dbReference type="STRING" id="375451.RD1_0107"/>
<dbReference type="KEGG" id="rde:RD1_0107"/>
<dbReference type="eggNOG" id="ENOG5032K5R">
    <property type="taxonomic scope" value="Bacteria"/>
</dbReference>
<dbReference type="HOGENOM" id="CLU_199082_2_0_5"/>
<dbReference type="Proteomes" id="UP000007029">
    <property type="component" value="Chromosome"/>
</dbReference>
<dbReference type="GO" id="GO:0005886">
    <property type="term" value="C:plasma membrane"/>
    <property type="evidence" value="ECO:0007669"/>
    <property type="project" value="UniProtKB-SubCell"/>
</dbReference>
<dbReference type="GO" id="GO:0030077">
    <property type="term" value="C:plasma membrane light-harvesting complex"/>
    <property type="evidence" value="ECO:0007669"/>
    <property type="project" value="InterPro"/>
</dbReference>
<dbReference type="GO" id="GO:0042314">
    <property type="term" value="F:bacteriochlorophyll binding"/>
    <property type="evidence" value="ECO:0007669"/>
    <property type="project" value="UniProtKB-KW"/>
</dbReference>
<dbReference type="GO" id="GO:0045156">
    <property type="term" value="F:electron transporter, transferring electrons within the cyclic electron transport pathway of photosynthesis activity"/>
    <property type="evidence" value="ECO:0007669"/>
    <property type="project" value="InterPro"/>
</dbReference>
<dbReference type="GO" id="GO:0046872">
    <property type="term" value="F:metal ion binding"/>
    <property type="evidence" value="ECO:0007669"/>
    <property type="project" value="UniProtKB-KW"/>
</dbReference>
<dbReference type="GO" id="GO:0019684">
    <property type="term" value="P:photosynthesis, light reaction"/>
    <property type="evidence" value="ECO:0007669"/>
    <property type="project" value="InterPro"/>
</dbReference>
<dbReference type="Gene3D" id="1.20.5.250">
    <property type="match status" value="1"/>
</dbReference>
<dbReference type="InterPro" id="IPR000066">
    <property type="entry name" value="Antenna_a/b"/>
</dbReference>
<dbReference type="InterPro" id="IPR023623">
    <property type="entry name" value="Antenna_beta_CS"/>
</dbReference>
<dbReference type="InterPro" id="IPR023624">
    <property type="entry name" value="Antenna_beta_dom_sf"/>
</dbReference>
<dbReference type="InterPro" id="IPR002362">
    <property type="entry name" value="LHB-1/5"/>
</dbReference>
<dbReference type="InterPro" id="IPR035889">
    <property type="entry name" value="Light-harvesting_complex"/>
</dbReference>
<dbReference type="NCBIfam" id="NF040862">
    <property type="entry name" value="pufB_517_ASD"/>
    <property type="match status" value="1"/>
</dbReference>
<dbReference type="Pfam" id="PF00556">
    <property type="entry name" value="LHC"/>
    <property type="match status" value="1"/>
</dbReference>
<dbReference type="PIRSF" id="PIRSF002900">
    <property type="entry name" value="Antenna_beta"/>
    <property type="match status" value="1"/>
</dbReference>
<dbReference type="PRINTS" id="PR00674">
    <property type="entry name" value="LIGHTHARVSTB"/>
</dbReference>
<dbReference type="SUPFAM" id="SSF56918">
    <property type="entry name" value="Light-harvesting complex subunits"/>
    <property type="match status" value="1"/>
</dbReference>
<dbReference type="PROSITE" id="PS00969">
    <property type="entry name" value="ANTENNA_COMP_BETA"/>
    <property type="match status" value="1"/>
</dbReference>
<gene>
    <name type="primary">pufB</name>
    <name type="ordered locus">RD1_0107</name>
</gene>
<comment type="function">
    <text>Antenna complexes are light-harvesting systems, which transfer the excitation energy to the reaction centers.</text>
</comment>
<comment type="subunit">
    <text>The core complex is formed by different alpha and beta chains, binding bacteriochlorophyll molecules, and arranged most probably in tetrameric structures disposed around the reaction center. The non-pigmented gamma chains may constitute additional components.</text>
</comment>
<comment type="subcellular location">
    <subcellularLocation>
        <location>Cell inner membrane</location>
        <topology>Single-pass type II membrane protein</topology>
    </subcellularLocation>
</comment>
<comment type="similarity">
    <text evidence="3">Belongs to the antenna complex beta subunit family.</text>
</comment>
<keyword id="KW-0042">Antenna complex</keyword>
<keyword id="KW-0076">Bacteriochlorophyll</keyword>
<keyword id="KW-0997">Cell inner membrane</keyword>
<keyword id="KW-1003">Cell membrane</keyword>
<keyword id="KW-0148">Chlorophyll</keyword>
<keyword id="KW-0157">Chromophore</keyword>
<keyword id="KW-0437">Light-harvesting polypeptide</keyword>
<keyword id="KW-0460">Magnesium</keyword>
<keyword id="KW-0472">Membrane</keyword>
<keyword id="KW-0479">Metal-binding</keyword>
<keyword id="KW-1185">Reference proteome</keyword>
<keyword id="KW-0812">Transmembrane</keyword>
<keyword id="KW-1133">Transmembrane helix</keyword>
<sequence>MADNTDLSFTGLTDEQAQELHSVYMSGLFLFAAVAVVAHLATYIWRPWFG</sequence>
<accession>P26274</accession>
<accession>Q16DV1</accession>
<protein>
    <recommendedName>
        <fullName>Light-harvesting protein B-870 beta chain</fullName>
    </recommendedName>
    <alternativeName>
        <fullName>Antenna pigment protein beta chain</fullName>
    </alternativeName>
</protein>